<feature type="chain" id="PRO_0000339141" description="Protein kti12">
    <location>
        <begin position="1"/>
        <end position="281"/>
    </location>
</feature>
<feature type="binding site" evidence="2">
    <location>
        <begin position="8"/>
        <end position="15"/>
    </location>
    <ligand>
        <name>ATP</name>
        <dbReference type="ChEBI" id="CHEBI:30616"/>
    </ligand>
</feature>
<dbReference type="EMBL" id="CU329670">
    <property type="protein sequence ID" value="CAB66461.1"/>
    <property type="molecule type" value="Genomic_DNA"/>
</dbReference>
<dbReference type="PIR" id="T50208">
    <property type="entry name" value="T50208"/>
</dbReference>
<dbReference type="RefSeq" id="NP_594556.1">
    <property type="nucleotide sequence ID" value="NM_001019985.2"/>
</dbReference>
<dbReference type="SMR" id="Q9P7V4"/>
<dbReference type="BioGRID" id="278919">
    <property type="interactions" value="22"/>
</dbReference>
<dbReference type="FunCoup" id="Q9P7V4">
    <property type="interactions" value="348"/>
</dbReference>
<dbReference type="STRING" id="284812.Q9P7V4"/>
<dbReference type="PaxDb" id="4896-SPAC30.02c.1"/>
<dbReference type="EnsemblFungi" id="SPAC30.02c.1">
    <property type="protein sequence ID" value="SPAC30.02c.1:pep"/>
    <property type="gene ID" value="SPAC30.02c"/>
</dbReference>
<dbReference type="GeneID" id="2542458"/>
<dbReference type="KEGG" id="spo:2542458"/>
<dbReference type="PomBase" id="SPAC30.02c">
    <property type="gene designation" value="kti12"/>
</dbReference>
<dbReference type="VEuPathDB" id="FungiDB:SPAC30.02c"/>
<dbReference type="eggNOG" id="KOG3062">
    <property type="taxonomic scope" value="Eukaryota"/>
</dbReference>
<dbReference type="HOGENOM" id="CLU_027147_2_0_1"/>
<dbReference type="InParanoid" id="Q9P7V4"/>
<dbReference type="OMA" id="THSRWDK"/>
<dbReference type="PhylomeDB" id="Q9P7V4"/>
<dbReference type="PRO" id="PR:Q9P7V4"/>
<dbReference type="Proteomes" id="UP000002485">
    <property type="component" value="Chromosome I"/>
</dbReference>
<dbReference type="GO" id="GO:0005829">
    <property type="term" value="C:cytosol"/>
    <property type="evidence" value="ECO:0007005"/>
    <property type="project" value="PomBase"/>
</dbReference>
<dbReference type="GO" id="GO:0005634">
    <property type="term" value="C:nucleus"/>
    <property type="evidence" value="ECO:0007005"/>
    <property type="project" value="PomBase"/>
</dbReference>
<dbReference type="GO" id="GO:0005524">
    <property type="term" value="F:ATP binding"/>
    <property type="evidence" value="ECO:0000255"/>
    <property type="project" value="PomBase"/>
</dbReference>
<dbReference type="GO" id="GO:0016887">
    <property type="term" value="F:ATP hydrolysis activity"/>
    <property type="evidence" value="ECO:0000255"/>
    <property type="project" value="PomBase"/>
</dbReference>
<dbReference type="GO" id="GO:0002098">
    <property type="term" value="P:tRNA wobble uridine modification"/>
    <property type="evidence" value="ECO:0000266"/>
    <property type="project" value="PomBase"/>
</dbReference>
<dbReference type="FunFam" id="3.40.50.300:FF:000827">
    <property type="entry name" value="KTI12 chromatin-associated homolog"/>
    <property type="match status" value="1"/>
</dbReference>
<dbReference type="Gene3D" id="3.40.50.300">
    <property type="entry name" value="P-loop containing nucleotide triphosphate hydrolases"/>
    <property type="match status" value="1"/>
</dbReference>
<dbReference type="InterPro" id="IPR013641">
    <property type="entry name" value="KTI12/PSTK"/>
</dbReference>
<dbReference type="InterPro" id="IPR027417">
    <property type="entry name" value="P-loop_NTPase"/>
</dbReference>
<dbReference type="PANTHER" id="PTHR12435">
    <property type="match status" value="1"/>
</dbReference>
<dbReference type="Pfam" id="PF08433">
    <property type="entry name" value="KTI12"/>
    <property type="match status" value="1"/>
</dbReference>
<dbReference type="SUPFAM" id="SSF52540">
    <property type="entry name" value="P-loop containing nucleoside triphosphate hydrolases"/>
    <property type="match status" value="1"/>
</dbReference>
<accession>Q9P7V4</accession>
<gene>
    <name type="primary">kti12</name>
    <name type="ORF">SPAC30.02c</name>
</gene>
<proteinExistence type="inferred from homology"/>
<sequence length="281" mass="32495">MPLIIVSGYPSSGKTTRSNELKKALEDRIHQNIDNTKDYRVIIINDESLNIEKETYRESKNEKAARGLLYSAVQRELSKSTFVICDALNYIKGFRYQLYCESKSMYTTHCVIHVAVPQDLCRKFNSNKEQPYPDDVLEQLMFRYEEPNGMTRWDSPLFTVLHDDASCPIDDIWSVLIHNKNVKPNQATMVKPPAEVNYLYELDKTTQDVIMLILDNSNDTSLITVPGSKLQIALPSVTVSLPLLQRLRRQFIQINRQQSYNTNVLKEMFVEFLNGQFETLD</sequence>
<name>KTI12_SCHPO</name>
<comment type="function">
    <text evidence="1">Elongator complex-associated factor that is not a structural subunit but rather transiently contacts the complex. Required for an early step in synthesis of 5-methoxycarbonylmethyl (mcm5) and 5-carbamoylmethyl (ncm5) groups present on uridines at the wobble position in tRNA (By similarity).</text>
</comment>
<comment type="subunit">
    <text evidence="1">Interacts with the elongator complex.</text>
</comment>
<comment type="subcellular location">
    <subcellularLocation>
        <location evidence="3">Cytoplasm</location>
    </subcellularLocation>
    <subcellularLocation>
        <location evidence="3">Nucleus</location>
    </subcellularLocation>
</comment>
<comment type="similarity">
    <text evidence="4">Belongs to the KTI12 family.</text>
</comment>
<reference key="1">
    <citation type="journal article" date="2002" name="Nature">
        <title>The genome sequence of Schizosaccharomyces pombe.</title>
        <authorList>
            <person name="Wood V."/>
            <person name="Gwilliam R."/>
            <person name="Rajandream M.A."/>
            <person name="Lyne M.H."/>
            <person name="Lyne R."/>
            <person name="Stewart A."/>
            <person name="Sgouros J.G."/>
            <person name="Peat N."/>
            <person name="Hayles J."/>
            <person name="Baker S.G."/>
            <person name="Basham D."/>
            <person name="Bowman S."/>
            <person name="Brooks K."/>
            <person name="Brown D."/>
            <person name="Brown S."/>
            <person name="Chillingworth T."/>
            <person name="Churcher C.M."/>
            <person name="Collins M."/>
            <person name="Connor R."/>
            <person name="Cronin A."/>
            <person name="Davis P."/>
            <person name="Feltwell T."/>
            <person name="Fraser A."/>
            <person name="Gentles S."/>
            <person name="Goble A."/>
            <person name="Hamlin N."/>
            <person name="Harris D.E."/>
            <person name="Hidalgo J."/>
            <person name="Hodgson G."/>
            <person name="Holroyd S."/>
            <person name="Hornsby T."/>
            <person name="Howarth S."/>
            <person name="Huckle E.J."/>
            <person name="Hunt S."/>
            <person name="Jagels K."/>
            <person name="James K.D."/>
            <person name="Jones L."/>
            <person name="Jones M."/>
            <person name="Leather S."/>
            <person name="McDonald S."/>
            <person name="McLean J."/>
            <person name="Mooney P."/>
            <person name="Moule S."/>
            <person name="Mungall K.L."/>
            <person name="Murphy L.D."/>
            <person name="Niblett D."/>
            <person name="Odell C."/>
            <person name="Oliver K."/>
            <person name="O'Neil S."/>
            <person name="Pearson D."/>
            <person name="Quail M.A."/>
            <person name="Rabbinowitsch E."/>
            <person name="Rutherford K.M."/>
            <person name="Rutter S."/>
            <person name="Saunders D."/>
            <person name="Seeger K."/>
            <person name="Sharp S."/>
            <person name="Skelton J."/>
            <person name="Simmonds M.N."/>
            <person name="Squares R."/>
            <person name="Squares S."/>
            <person name="Stevens K."/>
            <person name="Taylor K."/>
            <person name="Taylor R.G."/>
            <person name="Tivey A."/>
            <person name="Walsh S.V."/>
            <person name="Warren T."/>
            <person name="Whitehead S."/>
            <person name="Woodward J.R."/>
            <person name="Volckaert G."/>
            <person name="Aert R."/>
            <person name="Robben J."/>
            <person name="Grymonprez B."/>
            <person name="Weltjens I."/>
            <person name="Vanstreels E."/>
            <person name="Rieger M."/>
            <person name="Schaefer M."/>
            <person name="Mueller-Auer S."/>
            <person name="Gabel C."/>
            <person name="Fuchs M."/>
            <person name="Duesterhoeft A."/>
            <person name="Fritzc C."/>
            <person name="Holzer E."/>
            <person name="Moestl D."/>
            <person name="Hilbert H."/>
            <person name="Borzym K."/>
            <person name="Langer I."/>
            <person name="Beck A."/>
            <person name="Lehrach H."/>
            <person name="Reinhardt R."/>
            <person name="Pohl T.M."/>
            <person name="Eger P."/>
            <person name="Zimmermann W."/>
            <person name="Wedler H."/>
            <person name="Wambutt R."/>
            <person name="Purnelle B."/>
            <person name="Goffeau A."/>
            <person name="Cadieu E."/>
            <person name="Dreano S."/>
            <person name="Gloux S."/>
            <person name="Lelaure V."/>
            <person name="Mottier S."/>
            <person name="Galibert F."/>
            <person name="Aves S.J."/>
            <person name="Xiang Z."/>
            <person name="Hunt C."/>
            <person name="Moore K."/>
            <person name="Hurst S.M."/>
            <person name="Lucas M."/>
            <person name="Rochet M."/>
            <person name="Gaillardin C."/>
            <person name="Tallada V.A."/>
            <person name="Garzon A."/>
            <person name="Thode G."/>
            <person name="Daga R.R."/>
            <person name="Cruzado L."/>
            <person name="Jimenez J."/>
            <person name="Sanchez M."/>
            <person name="del Rey F."/>
            <person name="Benito J."/>
            <person name="Dominguez A."/>
            <person name="Revuelta J.L."/>
            <person name="Moreno S."/>
            <person name="Armstrong J."/>
            <person name="Forsburg S.L."/>
            <person name="Cerutti L."/>
            <person name="Lowe T."/>
            <person name="McCombie W.R."/>
            <person name="Paulsen I."/>
            <person name="Potashkin J."/>
            <person name="Shpakovski G.V."/>
            <person name="Ussery D."/>
            <person name="Barrell B.G."/>
            <person name="Nurse P."/>
        </authorList>
    </citation>
    <scope>NUCLEOTIDE SEQUENCE [LARGE SCALE GENOMIC DNA]</scope>
    <source>
        <strain>972 / ATCC 24843</strain>
    </source>
</reference>
<reference key="2">
    <citation type="journal article" date="2006" name="Nat. Biotechnol.">
        <title>ORFeome cloning and global analysis of protein localization in the fission yeast Schizosaccharomyces pombe.</title>
        <authorList>
            <person name="Matsuyama A."/>
            <person name="Arai R."/>
            <person name="Yashiroda Y."/>
            <person name="Shirai A."/>
            <person name="Kamata A."/>
            <person name="Sekido S."/>
            <person name="Kobayashi Y."/>
            <person name="Hashimoto A."/>
            <person name="Hamamoto M."/>
            <person name="Hiraoka Y."/>
            <person name="Horinouchi S."/>
            <person name="Yoshida M."/>
        </authorList>
    </citation>
    <scope>SUBCELLULAR LOCATION [LARGE SCALE ANALYSIS]</scope>
</reference>
<protein>
    <recommendedName>
        <fullName>Protein kti12</fullName>
    </recommendedName>
</protein>
<keyword id="KW-0067">ATP-binding</keyword>
<keyword id="KW-0963">Cytoplasm</keyword>
<keyword id="KW-0547">Nucleotide-binding</keyword>
<keyword id="KW-0539">Nucleus</keyword>
<keyword id="KW-1185">Reference proteome</keyword>
<keyword id="KW-0804">Transcription</keyword>
<keyword id="KW-0805">Transcription regulation</keyword>
<organism>
    <name type="scientific">Schizosaccharomyces pombe (strain 972 / ATCC 24843)</name>
    <name type="common">Fission yeast</name>
    <dbReference type="NCBI Taxonomy" id="284812"/>
    <lineage>
        <taxon>Eukaryota</taxon>
        <taxon>Fungi</taxon>
        <taxon>Dikarya</taxon>
        <taxon>Ascomycota</taxon>
        <taxon>Taphrinomycotina</taxon>
        <taxon>Schizosaccharomycetes</taxon>
        <taxon>Schizosaccharomycetales</taxon>
        <taxon>Schizosaccharomycetaceae</taxon>
        <taxon>Schizosaccharomyces</taxon>
    </lineage>
</organism>
<evidence type="ECO:0000250" key="1">
    <source>
        <dbReference type="UniProtKB" id="P34253"/>
    </source>
</evidence>
<evidence type="ECO:0000255" key="2"/>
<evidence type="ECO:0000269" key="3">
    <source>
    </source>
</evidence>
<evidence type="ECO:0000305" key="4"/>